<keyword id="KW-0028">Amino-acid biosynthesis</keyword>
<keyword id="KW-0479">Metal-binding</keyword>
<keyword id="KW-0486">Methionine biosynthesis</keyword>
<keyword id="KW-0489">Methyltransferase</keyword>
<keyword id="KW-0677">Repeat</keyword>
<keyword id="KW-0808">Transferase</keyword>
<keyword id="KW-0862">Zinc</keyword>
<sequence length="764" mass="84429">MTTAHILGFPRIGAQRELKFALERYWRDGASADAERALVDTGRALRAAHWQTQRDAGLDCVTVGDFAWYDHVLTTLAHVGGLPRRFGFDARALTLADYFAAARGNAAQPAMEMTKWFDTNYHYLVPEYSPATTFGPGVEWLFDEVREARALGHRPKAALVGPLTLLWLGKARDGLADRLELLPRLVPAYRALLARLREAGVDWVQIDEPIFALDLPAAWRDAARPAYEALVPGAPKLLVATYFDDVSEHAALLKALPVAGLHVDLVRGDAQLDAFVADYPADKVLSCGIVDGRNVWRNDLDRSLARLAPVHETLGERLWIATSCSLLHAPVDLAHEPKLDDELKAWLAFAVQKTREVAALRDALAKGRAAVAAEFDAAAVAAAARRTSARIHNPLVKRRVAALTDADARRASAYPARAAAQRARFDLPPLPTTTIGSFPQTPEIRRARAAFRQGVLDHLGYLEAMREQVRIAIDKQLSYGLDVLVHGEAERNDMVEYFGELMWGFAITSNGWVQSYGSRCVKPPLVYGDVYLPEPMTVGWASYAQSLTTKPVKGMLTGPVTMLQWSFVRDDQPRATTALQIALALRQETLDLEKAGIGMIQVDEPALREGLPLKARDRAEYLDWAVRAFRIAASGVADDTQIHTHMCYSEFGDILPSIAALDADVISIETTRSNMELLDAFETFEYPNEIGPGVYDIHSPRVPDADEIERLILLALERIPAQRLWVNPDCGLKTREWRQVDAALAAMVDAAKRVRQTVEQAVPA</sequence>
<accession>Q2SY55</accession>
<feature type="chain" id="PRO_1000071608" description="5-methyltetrahydropteroyltriglutamate--homocysteine methyltransferase">
    <location>
        <begin position="1"/>
        <end position="764"/>
    </location>
</feature>
<feature type="active site" description="Proton donor" evidence="1">
    <location>
        <position position="698"/>
    </location>
</feature>
<feature type="binding site" evidence="1">
    <location>
        <begin position="16"/>
        <end position="19"/>
    </location>
    <ligand>
        <name>5-methyltetrahydropteroyltri-L-glutamate</name>
        <dbReference type="ChEBI" id="CHEBI:58207"/>
    </ligand>
</feature>
<feature type="binding site" evidence="1">
    <location>
        <position position="115"/>
    </location>
    <ligand>
        <name>5-methyltetrahydropteroyltri-L-glutamate</name>
        <dbReference type="ChEBI" id="CHEBI:58207"/>
    </ligand>
</feature>
<feature type="binding site" evidence="1">
    <location>
        <begin position="435"/>
        <end position="437"/>
    </location>
    <ligand>
        <name>L-homocysteine</name>
        <dbReference type="ChEBI" id="CHEBI:58199"/>
    </ligand>
</feature>
<feature type="binding site" evidence="1">
    <location>
        <begin position="435"/>
        <end position="437"/>
    </location>
    <ligand>
        <name>L-methionine</name>
        <dbReference type="ChEBI" id="CHEBI:57844"/>
    </ligand>
</feature>
<feature type="binding site" evidence="1">
    <location>
        <position position="488"/>
    </location>
    <ligand>
        <name>L-homocysteine</name>
        <dbReference type="ChEBI" id="CHEBI:58199"/>
    </ligand>
</feature>
<feature type="binding site" evidence="1">
    <location>
        <position position="488"/>
    </location>
    <ligand>
        <name>L-methionine</name>
        <dbReference type="ChEBI" id="CHEBI:57844"/>
    </ligand>
</feature>
<feature type="binding site" evidence="1">
    <location>
        <begin position="519"/>
        <end position="520"/>
    </location>
    <ligand>
        <name>5-methyltetrahydropteroyltri-L-glutamate</name>
        <dbReference type="ChEBI" id="CHEBI:58207"/>
    </ligand>
</feature>
<feature type="binding site" evidence="1">
    <location>
        <position position="565"/>
    </location>
    <ligand>
        <name>5-methyltetrahydropteroyltri-L-glutamate</name>
        <dbReference type="ChEBI" id="CHEBI:58207"/>
    </ligand>
</feature>
<feature type="binding site" evidence="1">
    <location>
        <position position="603"/>
    </location>
    <ligand>
        <name>L-homocysteine</name>
        <dbReference type="ChEBI" id="CHEBI:58199"/>
    </ligand>
</feature>
<feature type="binding site" evidence="1">
    <location>
        <position position="603"/>
    </location>
    <ligand>
        <name>L-methionine</name>
        <dbReference type="ChEBI" id="CHEBI:57844"/>
    </ligand>
</feature>
<feature type="binding site" evidence="1">
    <location>
        <position position="609"/>
    </location>
    <ligand>
        <name>5-methyltetrahydropteroyltri-L-glutamate</name>
        <dbReference type="ChEBI" id="CHEBI:58207"/>
    </ligand>
</feature>
<feature type="binding site" evidence="1">
    <location>
        <position position="645"/>
    </location>
    <ligand>
        <name>Zn(2+)</name>
        <dbReference type="ChEBI" id="CHEBI:29105"/>
        <note>catalytic</note>
    </ligand>
</feature>
<feature type="binding site" evidence="1">
    <location>
        <position position="647"/>
    </location>
    <ligand>
        <name>Zn(2+)</name>
        <dbReference type="ChEBI" id="CHEBI:29105"/>
        <note>catalytic</note>
    </ligand>
</feature>
<feature type="binding site" evidence="1">
    <location>
        <position position="669"/>
    </location>
    <ligand>
        <name>Zn(2+)</name>
        <dbReference type="ChEBI" id="CHEBI:29105"/>
        <note>catalytic</note>
    </ligand>
</feature>
<feature type="binding site" evidence="1">
    <location>
        <position position="730"/>
    </location>
    <ligand>
        <name>Zn(2+)</name>
        <dbReference type="ChEBI" id="CHEBI:29105"/>
        <note>catalytic</note>
    </ligand>
</feature>
<comment type="function">
    <text evidence="1">Catalyzes the transfer of a methyl group from 5-methyltetrahydrofolate to homocysteine resulting in methionine formation.</text>
</comment>
<comment type="catalytic activity">
    <reaction evidence="1">
        <text>5-methyltetrahydropteroyltri-L-glutamate + L-homocysteine = tetrahydropteroyltri-L-glutamate + L-methionine</text>
        <dbReference type="Rhea" id="RHEA:21196"/>
        <dbReference type="ChEBI" id="CHEBI:57844"/>
        <dbReference type="ChEBI" id="CHEBI:58140"/>
        <dbReference type="ChEBI" id="CHEBI:58199"/>
        <dbReference type="ChEBI" id="CHEBI:58207"/>
        <dbReference type="EC" id="2.1.1.14"/>
    </reaction>
</comment>
<comment type="cofactor">
    <cofactor evidence="1">
        <name>Zn(2+)</name>
        <dbReference type="ChEBI" id="CHEBI:29105"/>
    </cofactor>
    <text evidence="1">Binds 1 zinc ion per subunit.</text>
</comment>
<comment type="pathway">
    <text evidence="1">Amino-acid biosynthesis; L-methionine biosynthesis via de novo pathway; L-methionine from L-homocysteine (MetE route): step 1/1.</text>
</comment>
<comment type="similarity">
    <text evidence="1">Belongs to the vitamin-B12 independent methionine synthase family.</text>
</comment>
<proteinExistence type="inferred from homology"/>
<name>METE_BURTA</name>
<protein>
    <recommendedName>
        <fullName evidence="1">5-methyltetrahydropteroyltriglutamate--homocysteine methyltransferase</fullName>
        <ecNumber evidence="1">2.1.1.14</ecNumber>
    </recommendedName>
    <alternativeName>
        <fullName evidence="1">Cobalamin-independent methionine synthase</fullName>
    </alternativeName>
    <alternativeName>
        <fullName evidence="1">Methionine synthase, vitamin-B12 independent isozyme</fullName>
    </alternativeName>
</protein>
<evidence type="ECO:0000255" key="1">
    <source>
        <dbReference type="HAMAP-Rule" id="MF_00172"/>
    </source>
</evidence>
<organism>
    <name type="scientific">Burkholderia thailandensis (strain ATCC 700388 / DSM 13276 / CCUG 48851 / CIP 106301 / E264)</name>
    <dbReference type="NCBI Taxonomy" id="271848"/>
    <lineage>
        <taxon>Bacteria</taxon>
        <taxon>Pseudomonadati</taxon>
        <taxon>Pseudomonadota</taxon>
        <taxon>Betaproteobacteria</taxon>
        <taxon>Burkholderiales</taxon>
        <taxon>Burkholderiaceae</taxon>
        <taxon>Burkholderia</taxon>
        <taxon>pseudomallei group</taxon>
    </lineage>
</organism>
<gene>
    <name evidence="1" type="primary">metE</name>
    <name type="ordered locus">BTH_I1606</name>
</gene>
<reference key="1">
    <citation type="journal article" date="2005" name="BMC Genomics">
        <title>Bacterial genome adaptation to niches: divergence of the potential virulence genes in three Burkholderia species of different survival strategies.</title>
        <authorList>
            <person name="Kim H.S."/>
            <person name="Schell M.A."/>
            <person name="Yu Y."/>
            <person name="Ulrich R.L."/>
            <person name="Sarria S.H."/>
            <person name="Nierman W.C."/>
            <person name="DeShazer D."/>
        </authorList>
    </citation>
    <scope>NUCLEOTIDE SEQUENCE [LARGE SCALE GENOMIC DNA]</scope>
    <source>
        <strain>ATCC 700388 / DSM 13276 / CCUG 48851 / CIP 106301 / E264</strain>
    </source>
</reference>
<dbReference type="EC" id="2.1.1.14" evidence="1"/>
<dbReference type="EMBL" id="CP000086">
    <property type="protein sequence ID" value="ABC38605.1"/>
    <property type="molecule type" value="Genomic_DNA"/>
</dbReference>
<dbReference type="RefSeq" id="WP_009889789.1">
    <property type="nucleotide sequence ID" value="NZ_CP008785.1"/>
</dbReference>
<dbReference type="SMR" id="Q2SY55"/>
<dbReference type="GeneID" id="45121340"/>
<dbReference type="KEGG" id="bte:BTH_I1606"/>
<dbReference type="HOGENOM" id="CLU_013175_0_0_4"/>
<dbReference type="UniPathway" id="UPA00051">
    <property type="reaction ID" value="UER00082"/>
</dbReference>
<dbReference type="Proteomes" id="UP000001930">
    <property type="component" value="Chromosome I"/>
</dbReference>
<dbReference type="GO" id="GO:0003871">
    <property type="term" value="F:5-methyltetrahydropteroyltriglutamate-homocysteine S-methyltransferase activity"/>
    <property type="evidence" value="ECO:0007669"/>
    <property type="project" value="UniProtKB-UniRule"/>
</dbReference>
<dbReference type="GO" id="GO:0008270">
    <property type="term" value="F:zinc ion binding"/>
    <property type="evidence" value="ECO:0007669"/>
    <property type="project" value="InterPro"/>
</dbReference>
<dbReference type="GO" id="GO:0009086">
    <property type="term" value="P:methionine biosynthetic process"/>
    <property type="evidence" value="ECO:0007669"/>
    <property type="project" value="UniProtKB-UniRule"/>
</dbReference>
<dbReference type="GO" id="GO:0032259">
    <property type="term" value="P:methylation"/>
    <property type="evidence" value="ECO:0007669"/>
    <property type="project" value="UniProtKB-KW"/>
</dbReference>
<dbReference type="CDD" id="cd03311">
    <property type="entry name" value="CIMS_C_terminal_like"/>
    <property type="match status" value="1"/>
</dbReference>
<dbReference type="CDD" id="cd03312">
    <property type="entry name" value="CIMS_N_terminal_like"/>
    <property type="match status" value="1"/>
</dbReference>
<dbReference type="Gene3D" id="3.20.20.210">
    <property type="match status" value="2"/>
</dbReference>
<dbReference type="HAMAP" id="MF_00172">
    <property type="entry name" value="Meth_synth"/>
    <property type="match status" value="1"/>
</dbReference>
<dbReference type="InterPro" id="IPR013215">
    <property type="entry name" value="Cbl-indep_Met_Synth_N"/>
</dbReference>
<dbReference type="InterPro" id="IPR006276">
    <property type="entry name" value="Cobalamin-indep_Met_synthase"/>
</dbReference>
<dbReference type="InterPro" id="IPR002629">
    <property type="entry name" value="Met_Synth_C/arc"/>
</dbReference>
<dbReference type="InterPro" id="IPR038071">
    <property type="entry name" value="UROD/MetE-like_sf"/>
</dbReference>
<dbReference type="NCBIfam" id="TIGR01371">
    <property type="entry name" value="met_syn_B12ind"/>
    <property type="match status" value="1"/>
</dbReference>
<dbReference type="NCBIfam" id="NF003556">
    <property type="entry name" value="PRK05222.1"/>
    <property type="match status" value="1"/>
</dbReference>
<dbReference type="PANTHER" id="PTHR30519">
    <property type="entry name" value="5-METHYLTETRAHYDROPTEROYLTRIGLUTAMATE--HOMOCYSTEINE METHYLTRANSFERASE"/>
    <property type="match status" value="1"/>
</dbReference>
<dbReference type="Pfam" id="PF08267">
    <property type="entry name" value="Meth_synt_1"/>
    <property type="match status" value="1"/>
</dbReference>
<dbReference type="Pfam" id="PF01717">
    <property type="entry name" value="Meth_synt_2"/>
    <property type="match status" value="1"/>
</dbReference>
<dbReference type="PIRSF" id="PIRSF000382">
    <property type="entry name" value="MeTrfase_B12_ind"/>
    <property type="match status" value="1"/>
</dbReference>
<dbReference type="SUPFAM" id="SSF51726">
    <property type="entry name" value="UROD/MetE-like"/>
    <property type="match status" value="2"/>
</dbReference>